<feature type="chain" id="PRO_0000258224" description="Large ribosomal subunit protein uL11">
    <location>
        <begin position="1"/>
        <end position="141"/>
    </location>
</feature>
<evidence type="ECO:0000255" key="1">
    <source>
        <dbReference type="HAMAP-Rule" id="MF_00736"/>
    </source>
</evidence>
<evidence type="ECO:0000305" key="2"/>
<reference key="1">
    <citation type="journal article" date="2005" name="J. Infect. Dis.">
        <title>Genome sequence of a serotype M28 strain of group A Streptococcus: potential new insights into puerperal sepsis and bacterial disease specificity.</title>
        <authorList>
            <person name="Green N.M."/>
            <person name="Zhang S."/>
            <person name="Porcella S.F."/>
            <person name="Nagiec M.J."/>
            <person name="Barbian K.D."/>
            <person name="Beres S.B."/>
            <person name="Lefebvre R.B."/>
            <person name="Musser J.M."/>
        </authorList>
    </citation>
    <scope>NUCLEOTIDE SEQUENCE [LARGE SCALE GENOMIC DNA]</scope>
    <source>
        <strain>MGAS6180</strain>
    </source>
</reference>
<sequence length="141" mass="14801">MAKKVEKLVKLQIPAGKATPAPPVGPALGQAGINIMGFTKEFNARTADQAGMIIPVVISVYEDKSFDFITKTPPAAVLLKKAAGVEKGSGTPNTTKVATVTRAQVQEIAETKMPDLNAANIEAAMRMIEGTARSMGFTVTD</sequence>
<accession>Q48UX9</accession>
<protein>
    <recommendedName>
        <fullName evidence="1">Large ribosomal subunit protein uL11</fullName>
    </recommendedName>
    <alternativeName>
        <fullName evidence="2">50S ribosomal protein L11</fullName>
    </alternativeName>
</protein>
<name>RL11_STRPM</name>
<comment type="function">
    <text evidence="1">Forms part of the ribosomal stalk which helps the ribosome interact with GTP-bound translation factors.</text>
</comment>
<comment type="subunit">
    <text evidence="1">Part of the ribosomal stalk of the 50S ribosomal subunit. Interacts with L10 and the large rRNA to form the base of the stalk. L10 forms an elongated spine to which L12 dimers bind in a sequential fashion forming a multimeric L10(L12)X complex.</text>
</comment>
<comment type="PTM">
    <text evidence="1">One or more lysine residues are methylated.</text>
</comment>
<comment type="similarity">
    <text evidence="1">Belongs to the universal ribosomal protein uL11 family.</text>
</comment>
<comment type="sequence caution" evidence="2">
    <conflict type="erroneous initiation">
        <sequence resource="EMBL-CDS" id="AAX71477"/>
    </conflict>
</comment>
<proteinExistence type="inferred from homology"/>
<keyword id="KW-0488">Methylation</keyword>
<keyword id="KW-0687">Ribonucleoprotein</keyword>
<keyword id="KW-0689">Ribosomal protein</keyword>
<keyword id="KW-0694">RNA-binding</keyword>
<keyword id="KW-0699">rRNA-binding</keyword>
<organism>
    <name type="scientific">Streptococcus pyogenes serotype M28 (strain MGAS6180)</name>
    <dbReference type="NCBI Taxonomy" id="319701"/>
    <lineage>
        <taxon>Bacteria</taxon>
        <taxon>Bacillati</taxon>
        <taxon>Bacillota</taxon>
        <taxon>Bacilli</taxon>
        <taxon>Lactobacillales</taxon>
        <taxon>Streptococcaceae</taxon>
        <taxon>Streptococcus</taxon>
    </lineage>
</organism>
<dbReference type="EMBL" id="CP000056">
    <property type="protein sequence ID" value="AAX71477.1"/>
    <property type="status" value="ALT_INIT"/>
    <property type="molecule type" value="Genomic_DNA"/>
</dbReference>
<dbReference type="RefSeq" id="WP_002990800.1">
    <property type="nucleotide sequence ID" value="NC_007296.2"/>
</dbReference>
<dbReference type="SMR" id="Q48UX9"/>
<dbReference type="GeneID" id="69901302"/>
<dbReference type="KEGG" id="spb:M28_Spy0363"/>
<dbReference type="HOGENOM" id="CLU_074237_2_1_9"/>
<dbReference type="GO" id="GO:0022625">
    <property type="term" value="C:cytosolic large ribosomal subunit"/>
    <property type="evidence" value="ECO:0007669"/>
    <property type="project" value="TreeGrafter"/>
</dbReference>
<dbReference type="GO" id="GO:0070180">
    <property type="term" value="F:large ribosomal subunit rRNA binding"/>
    <property type="evidence" value="ECO:0007669"/>
    <property type="project" value="UniProtKB-UniRule"/>
</dbReference>
<dbReference type="GO" id="GO:0003735">
    <property type="term" value="F:structural constituent of ribosome"/>
    <property type="evidence" value="ECO:0007669"/>
    <property type="project" value="InterPro"/>
</dbReference>
<dbReference type="GO" id="GO:0006412">
    <property type="term" value="P:translation"/>
    <property type="evidence" value="ECO:0007669"/>
    <property type="project" value="UniProtKB-UniRule"/>
</dbReference>
<dbReference type="CDD" id="cd00349">
    <property type="entry name" value="Ribosomal_L11"/>
    <property type="match status" value="1"/>
</dbReference>
<dbReference type="FunFam" id="1.10.10.250:FF:000001">
    <property type="entry name" value="50S ribosomal protein L11"/>
    <property type="match status" value="1"/>
</dbReference>
<dbReference type="FunFam" id="3.30.1550.10:FF:000001">
    <property type="entry name" value="50S ribosomal protein L11"/>
    <property type="match status" value="1"/>
</dbReference>
<dbReference type="Gene3D" id="1.10.10.250">
    <property type="entry name" value="Ribosomal protein L11, C-terminal domain"/>
    <property type="match status" value="1"/>
</dbReference>
<dbReference type="Gene3D" id="3.30.1550.10">
    <property type="entry name" value="Ribosomal protein L11/L12, N-terminal domain"/>
    <property type="match status" value="1"/>
</dbReference>
<dbReference type="HAMAP" id="MF_00736">
    <property type="entry name" value="Ribosomal_uL11"/>
    <property type="match status" value="1"/>
</dbReference>
<dbReference type="InterPro" id="IPR000911">
    <property type="entry name" value="Ribosomal_uL11"/>
</dbReference>
<dbReference type="InterPro" id="IPR006519">
    <property type="entry name" value="Ribosomal_uL11_bac-typ"/>
</dbReference>
<dbReference type="InterPro" id="IPR020783">
    <property type="entry name" value="Ribosomal_uL11_C"/>
</dbReference>
<dbReference type="InterPro" id="IPR036769">
    <property type="entry name" value="Ribosomal_uL11_C_sf"/>
</dbReference>
<dbReference type="InterPro" id="IPR020785">
    <property type="entry name" value="Ribosomal_uL11_CS"/>
</dbReference>
<dbReference type="InterPro" id="IPR020784">
    <property type="entry name" value="Ribosomal_uL11_N"/>
</dbReference>
<dbReference type="InterPro" id="IPR036796">
    <property type="entry name" value="Ribosomal_uL11_N_sf"/>
</dbReference>
<dbReference type="NCBIfam" id="TIGR01632">
    <property type="entry name" value="L11_bact"/>
    <property type="match status" value="1"/>
</dbReference>
<dbReference type="PANTHER" id="PTHR11661">
    <property type="entry name" value="60S RIBOSOMAL PROTEIN L12"/>
    <property type="match status" value="1"/>
</dbReference>
<dbReference type="PANTHER" id="PTHR11661:SF1">
    <property type="entry name" value="LARGE RIBOSOMAL SUBUNIT PROTEIN UL11M"/>
    <property type="match status" value="1"/>
</dbReference>
<dbReference type="Pfam" id="PF00298">
    <property type="entry name" value="Ribosomal_L11"/>
    <property type="match status" value="1"/>
</dbReference>
<dbReference type="Pfam" id="PF03946">
    <property type="entry name" value="Ribosomal_L11_N"/>
    <property type="match status" value="1"/>
</dbReference>
<dbReference type="SMART" id="SM00649">
    <property type="entry name" value="RL11"/>
    <property type="match status" value="1"/>
</dbReference>
<dbReference type="SUPFAM" id="SSF54747">
    <property type="entry name" value="Ribosomal L11/L12e N-terminal domain"/>
    <property type="match status" value="1"/>
</dbReference>
<dbReference type="SUPFAM" id="SSF46906">
    <property type="entry name" value="Ribosomal protein L11, C-terminal domain"/>
    <property type="match status" value="1"/>
</dbReference>
<dbReference type="PROSITE" id="PS00359">
    <property type="entry name" value="RIBOSOMAL_L11"/>
    <property type="match status" value="1"/>
</dbReference>
<gene>
    <name evidence="1" type="primary">rplK</name>
    <name type="ordered locus">M28_Spy0363</name>
</gene>